<sequence length="354" mass="39813">MNGTEGPMFYVPMSNATGVVKSPYDYPQYYLVAPWAYGCLAAYMFFLIITGFPINFLTLYVTIEHKKLRTPLNYILLNLAISDLFMVFGGFTTTMYTSLHGYFVFGRIGCNLEGFFATLGGEMGLWSLVVLAFERWMVVCKPVSNFRFGENHAIMGVVFTWFMACTCAVPPLVGWSRYIPEGMQCSCGVDYYTRAPGYNNESFVIYMFLVHFIIPLIVIFFCYGRLVCTVKDAAAQQQESETTQRAEREVTRMVVIMVIGFLICWIPYASVAWYIFTHQGSEFGPVFMTVPAFFAKSAAVYNPCIYICMNKQFRHCMITTLCCGKNPFEEEEGASTTASKTEASSVSSSSVSPA</sequence>
<proteinExistence type="evidence at transcript level"/>
<accession>P51488</accession>
<accession>O42325</accession>
<organism>
    <name type="scientific">Cyprinus carpio</name>
    <name type="common">Common carp</name>
    <dbReference type="NCBI Taxonomy" id="7962"/>
    <lineage>
        <taxon>Eukaryota</taxon>
        <taxon>Metazoa</taxon>
        <taxon>Chordata</taxon>
        <taxon>Craniata</taxon>
        <taxon>Vertebrata</taxon>
        <taxon>Euteleostomi</taxon>
        <taxon>Actinopterygii</taxon>
        <taxon>Neopterygii</taxon>
        <taxon>Teleostei</taxon>
        <taxon>Ostariophysi</taxon>
        <taxon>Cypriniformes</taxon>
        <taxon>Cyprinidae</taxon>
        <taxon>Cyprininae</taxon>
        <taxon>Cyprinus</taxon>
    </lineage>
</organism>
<name>OPSD_CYPCA</name>
<feature type="chain" id="PRO_0000197668" description="Rhodopsin">
    <location>
        <begin position="1"/>
        <end position="354"/>
    </location>
</feature>
<feature type="topological domain" description="Extracellular" evidence="9">
    <location>
        <begin position="1"/>
        <end position="36"/>
    </location>
</feature>
<feature type="transmembrane region" description="Helical; Name=1" evidence="1">
    <location>
        <begin position="37"/>
        <end position="61"/>
    </location>
</feature>
<feature type="topological domain" description="Cytoplasmic" evidence="9">
    <location>
        <begin position="62"/>
        <end position="73"/>
    </location>
</feature>
<feature type="transmembrane region" description="Helical; Name=2" evidence="1">
    <location>
        <begin position="74"/>
        <end position="96"/>
    </location>
</feature>
<feature type="topological domain" description="Extracellular" evidence="9">
    <location>
        <begin position="97"/>
        <end position="110"/>
    </location>
</feature>
<feature type="transmembrane region" description="Helical; Name=3" evidence="1">
    <location>
        <begin position="111"/>
        <end position="133"/>
    </location>
</feature>
<feature type="topological domain" description="Cytoplasmic" evidence="9">
    <location>
        <begin position="134"/>
        <end position="152"/>
    </location>
</feature>
<feature type="transmembrane region" description="Helical; Name=4" evidence="1">
    <location>
        <begin position="153"/>
        <end position="173"/>
    </location>
</feature>
<feature type="topological domain" description="Extracellular" evidence="9">
    <location>
        <begin position="174"/>
        <end position="202"/>
    </location>
</feature>
<feature type="transmembrane region" description="Helical; Name=5" evidence="1">
    <location>
        <begin position="203"/>
        <end position="224"/>
    </location>
</feature>
<feature type="topological domain" description="Cytoplasmic" evidence="9">
    <location>
        <begin position="225"/>
        <end position="252"/>
    </location>
</feature>
<feature type="transmembrane region" description="Helical; Name=6" evidence="1">
    <location>
        <begin position="253"/>
        <end position="274"/>
    </location>
</feature>
<feature type="topological domain" description="Extracellular" evidence="9">
    <location>
        <begin position="275"/>
        <end position="286"/>
    </location>
</feature>
<feature type="transmembrane region" description="Helical; Name=7" evidence="1">
    <location>
        <begin position="287"/>
        <end position="308"/>
    </location>
</feature>
<feature type="topological domain" description="Cytoplasmic" evidence="9">
    <location>
        <begin position="309"/>
        <end position="354"/>
    </location>
</feature>
<feature type="region of interest" description="Disordered" evidence="7">
    <location>
        <begin position="333"/>
        <end position="354"/>
    </location>
</feature>
<feature type="short sequence motif" description="'Ionic lock' involved in activated form stabilization" evidence="1">
    <location>
        <begin position="134"/>
        <end position="136"/>
    </location>
</feature>
<feature type="compositionally biased region" description="Low complexity" evidence="7">
    <location>
        <begin position="334"/>
        <end position="354"/>
    </location>
</feature>
<feature type="site" description="Plays an important role in the conformation switch to the active conformation" evidence="1">
    <location>
        <position position="113"/>
    </location>
</feature>
<feature type="modified residue" description="N6-(retinylidene)lysine" evidence="1">
    <location>
        <position position="296"/>
    </location>
</feature>
<feature type="lipid moiety-binding region" description="S-palmitoyl cysteine" evidence="1">
    <location>
        <position position="322"/>
    </location>
</feature>
<feature type="lipid moiety-binding region" description="S-palmitoyl cysteine" evidence="1">
    <location>
        <position position="323"/>
    </location>
</feature>
<feature type="glycosylation site" description="N-linked (GlcNAc...) asparagine" evidence="5">
    <location>
        <position position="2"/>
    </location>
</feature>
<feature type="glycosylation site" description="N-linked (GlcNAc...) asparagine" evidence="5">
    <location>
        <position position="15"/>
    </location>
</feature>
<feature type="disulfide bond" evidence="6">
    <location>
        <begin position="110"/>
        <end position="187"/>
    </location>
</feature>
<feature type="sequence conflict" description="In Ref. 2; CAA96518." evidence="9" ref="2">
    <original>V</original>
    <variation>I</variation>
    <location>
        <position position="19"/>
    </location>
</feature>
<feature type="sequence conflict" description="In Ref. 2; CAA96518." evidence="9" ref="2">
    <original>I</original>
    <variation>V</variation>
    <location>
        <position position="54"/>
    </location>
</feature>
<feature type="sequence conflict" description="In Ref. 2; CAA96518." evidence="9" ref="2">
    <original>I</original>
    <variation>V</variation>
    <location>
        <position position="108"/>
    </location>
</feature>
<feature type="sequence conflict" description="In Ref. 2; CAA96518." evidence="9" ref="2">
    <original>VP</original>
    <variation>EA</variation>
    <location>
        <begin position="169"/>
        <end position="170"/>
    </location>
</feature>
<feature type="sequence conflict" description="In Ref. 2; CAA96518." evidence="9" ref="2">
    <original>R</original>
    <variation>L</variation>
    <location>
        <position position="225"/>
    </location>
</feature>
<feature type="sequence conflict" description="In Ref. 2; CAA96518." evidence="9" ref="2">
    <original>H</original>
    <variation>N</variation>
    <location>
        <position position="315"/>
    </location>
</feature>
<reference key="1">
    <citation type="journal article" date="1994" name="Comp. Biochem. Physiol.">
        <title>Molecular cloning of the common carp (Cyprinus carpio) rhodopsin cDNA.</title>
        <authorList>
            <person name="Tsai H.J."/>
            <person name="Shih S.R."/>
            <person name="Kuo C.M."/>
            <person name="Li L.K."/>
        </authorList>
    </citation>
    <scope>NUCLEOTIDE SEQUENCE [MRNA]</scope>
    <source>
        <tissue>Retina</tissue>
    </source>
</reference>
<reference key="2">
    <citation type="journal article" date="1997" name="Biochim. Biophys. Acta">
        <title>A second type of rod opsin cDNA from the common carp (Cyprinus carpio).</title>
        <authorList>
            <person name="Lim J."/>
            <person name="Chong J."/>
            <person name="Tsai H.J."/>
        </authorList>
    </citation>
    <scope>NUCLEOTIDE SEQUENCE [MRNA]</scope>
    <source>
        <tissue>Retina</tissue>
    </source>
</reference>
<reference key="3">
    <citation type="journal article" date="2008" name="Photochem. Photobiol.">
        <title>Presence of rhodopsin and porphyropsin in the eyes of 164 fishes, representing marine, diadromous, coastal and freshwater species--a qualitative and comparative study.</title>
        <authorList>
            <person name="Toyama M."/>
            <person name="Hironaka M."/>
            <person name="Yamahama Y."/>
            <person name="Horiguchi H."/>
            <person name="Tsukada O."/>
            <person name="Uto N."/>
            <person name="Ueno Y."/>
            <person name="Tokunaga F."/>
            <person name="Seno K."/>
            <person name="Hariyama T."/>
        </authorList>
    </citation>
    <scope>FUNCTION</scope>
</reference>
<gene>
    <name type="primary">rho</name>
</gene>
<comment type="function">
    <text evidence="1 2 3 8">Photoreceptor required for image-forming vision at low light intensity. While most salt water fish species use retinal as chromophore, most freshwater fish use 3-dehydroretinal, or a mixture of retinal and 3-dehydroretinal (PubMed:18422881). Light-induced isomerization of 11-cis to all-trans retinal triggers a conformational change that activates signaling via G-proteins. Subsequent receptor phosphorylation mediates displacement of the bound G-protein alpha subunit by arrestin and terminates signaling (By similarity).</text>
</comment>
<comment type="subcellular location">
    <subcellularLocation>
        <location evidence="2">Membrane</location>
        <topology evidence="2">Multi-pass membrane protein</topology>
    </subcellularLocation>
    <subcellularLocation>
        <location evidence="4">Cell projection</location>
        <location evidence="4">Cilium</location>
        <location evidence="4">Photoreceptor outer segment</location>
    </subcellularLocation>
    <text evidence="2">Synthesized in the inner segment (IS) of rod photoreceptor cells before vectorial transport to disk membranes in the rod outer segment (OS) photosensory cilia.</text>
</comment>
<comment type="PTM">
    <text evidence="1">Phosphorylated on some or all of the serine and threonine residues present in the C-terminal region.</text>
</comment>
<comment type="PTM">
    <text evidence="1">Contains one covalently linked retinal chromophore.</text>
</comment>
<comment type="similarity">
    <text evidence="6">Belongs to the G-protein coupled receptor 1 family. Opsin subfamily.</text>
</comment>
<keyword id="KW-0966">Cell projection</keyword>
<keyword id="KW-0157">Chromophore</keyword>
<keyword id="KW-1015">Disulfide bond</keyword>
<keyword id="KW-0297">G-protein coupled receptor</keyword>
<keyword id="KW-0325">Glycoprotein</keyword>
<keyword id="KW-0449">Lipoprotein</keyword>
<keyword id="KW-0472">Membrane</keyword>
<keyword id="KW-0564">Palmitate</keyword>
<keyword id="KW-0597">Phosphoprotein</keyword>
<keyword id="KW-0600">Photoreceptor protein</keyword>
<keyword id="KW-0675">Receptor</keyword>
<keyword id="KW-1185">Reference proteome</keyword>
<keyword id="KW-0681">Retinal protein</keyword>
<keyword id="KW-0716">Sensory transduction</keyword>
<keyword id="KW-0807">Transducer</keyword>
<keyword id="KW-0812">Transmembrane</keyword>
<keyword id="KW-1133">Transmembrane helix</keyword>
<keyword id="KW-0844">Vision</keyword>
<evidence type="ECO:0000250" key="1">
    <source>
        <dbReference type="UniProtKB" id="P02699"/>
    </source>
</evidence>
<evidence type="ECO:0000250" key="2">
    <source>
        <dbReference type="UniProtKB" id="P08100"/>
    </source>
</evidence>
<evidence type="ECO:0000250" key="3">
    <source>
        <dbReference type="UniProtKB" id="P32309"/>
    </source>
</evidence>
<evidence type="ECO:0000250" key="4">
    <source>
        <dbReference type="UniProtKB" id="P35359"/>
    </source>
</evidence>
<evidence type="ECO:0000255" key="5"/>
<evidence type="ECO:0000255" key="6">
    <source>
        <dbReference type="PROSITE-ProRule" id="PRU00521"/>
    </source>
</evidence>
<evidence type="ECO:0000256" key="7">
    <source>
        <dbReference type="SAM" id="MobiDB-lite"/>
    </source>
</evidence>
<evidence type="ECO:0000269" key="8">
    <source>
    </source>
</evidence>
<evidence type="ECO:0000305" key="9"/>
<dbReference type="EMBL" id="U02475">
    <property type="protein sequence ID" value="AAB06368.1"/>
    <property type="molecule type" value="mRNA"/>
</dbReference>
<dbReference type="EMBL" id="S74449">
    <property type="protein sequence ID" value="AAB33306.1"/>
    <property type="molecule type" value="mRNA"/>
</dbReference>
<dbReference type="EMBL" id="Z71999">
    <property type="protein sequence ID" value="CAA96518.1"/>
    <property type="molecule type" value="mRNA"/>
</dbReference>
<dbReference type="SMR" id="P51488"/>
<dbReference type="GlyCosmos" id="P51488">
    <property type="glycosylation" value="2 sites, No reported glycans"/>
</dbReference>
<dbReference type="Proteomes" id="UP000694384">
    <property type="component" value="Unplaced"/>
</dbReference>
<dbReference type="Proteomes" id="UP000694427">
    <property type="component" value="Unplaced"/>
</dbReference>
<dbReference type="Proteomes" id="UP000694700">
    <property type="component" value="Unplaced"/>
</dbReference>
<dbReference type="Proteomes" id="UP000694701">
    <property type="component" value="Unplaced"/>
</dbReference>
<dbReference type="Proteomes" id="UP001155660">
    <property type="component" value="Unplaced"/>
</dbReference>
<dbReference type="GO" id="GO:0016020">
    <property type="term" value="C:membrane"/>
    <property type="evidence" value="ECO:0000250"/>
    <property type="project" value="UniProtKB"/>
</dbReference>
<dbReference type="GO" id="GO:0097381">
    <property type="term" value="C:photoreceptor disc membrane"/>
    <property type="evidence" value="ECO:0000250"/>
    <property type="project" value="UniProtKB"/>
</dbReference>
<dbReference type="GO" id="GO:0005886">
    <property type="term" value="C:plasma membrane"/>
    <property type="evidence" value="ECO:0000250"/>
    <property type="project" value="UniProtKB"/>
</dbReference>
<dbReference type="GO" id="GO:0005502">
    <property type="term" value="F:11-cis retinal binding"/>
    <property type="evidence" value="ECO:0000250"/>
    <property type="project" value="UniProtKB"/>
</dbReference>
<dbReference type="GO" id="GO:0008020">
    <property type="term" value="F:G protein-coupled photoreceptor activity"/>
    <property type="evidence" value="ECO:0000250"/>
    <property type="project" value="UniProtKB"/>
</dbReference>
<dbReference type="GO" id="GO:0016038">
    <property type="term" value="P:absorption of visible light"/>
    <property type="evidence" value="ECO:0000250"/>
    <property type="project" value="UniProtKB"/>
</dbReference>
<dbReference type="GO" id="GO:0016056">
    <property type="term" value="P:G protein-coupled opsin signaling pathway"/>
    <property type="evidence" value="ECO:0000250"/>
    <property type="project" value="UniProtKB"/>
</dbReference>
<dbReference type="GO" id="GO:0007601">
    <property type="term" value="P:visual perception"/>
    <property type="evidence" value="ECO:0007669"/>
    <property type="project" value="UniProtKB-KW"/>
</dbReference>
<dbReference type="CDD" id="cd15080">
    <property type="entry name" value="7tmA_MWS_opsin"/>
    <property type="match status" value="1"/>
</dbReference>
<dbReference type="FunFam" id="1.20.1070.10:FF:000018">
    <property type="entry name" value="Rhodopsin"/>
    <property type="match status" value="1"/>
</dbReference>
<dbReference type="Gene3D" id="1.20.1070.10">
    <property type="entry name" value="Rhodopsin 7-helix transmembrane proteins"/>
    <property type="match status" value="1"/>
</dbReference>
<dbReference type="InterPro" id="IPR050125">
    <property type="entry name" value="GPCR_opsins"/>
</dbReference>
<dbReference type="InterPro" id="IPR000276">
    <property type="entry name" value="GPCR_Rhodpsn"/>
</dbReference>
<dbReference type="InterPro" id="IPR017452">
    <property type="entry name" value="GPCR_Rhodpsn_7TM"/>
</dbReference>
<dbReference type="InterPro" id="IPR001760">
    <property type="entry name" value="Opsin"/>
</dbReference>
<dbReference type="InterPro" id="IPR027430">
    <property type="entry name" value="Retinal_BS"/>
</dbReference>
<dbReference type="InterPro" id="IPR000732">
    <property type="entry name" value="Rhodopsin"/>
</dbReference>
<dbReference type="InterPro" id="IPR019477">
    <property type="entry name" value="Rhodopsin_N"/>
</dbReference>
<dbReference type="PANTHER" id="PTHR24240">
    <property type="entry name" value="OPSIN"/>
    <property type="match status" value="1"/>
</dbReference>
<dbReference type="Pfam" id="PF00001">
    <property type="entry name" value="7tm_1"/>
    <property type="match status" value="1"/>
</dbReference>
<dbReference type="Pfam" id="PF10413">
    <property type="entry name" value="Rhodopsin_N"/>
    <property type="match status" value="1"/>
</dbReference>
<dbReference type="PRINTS" id="PR00237">
    <property type="entry name" value="GPCRRHODOPSN"/>
</dbReference>
<dbReference type="PRINTS" id="PR00238">
    <property type="entry name" value="OPSIN"/>
</dbReference>
<dbReference type="PRINTS" id="PR00579">
    <property type="entry name" value="RHODOPSIN"/>
</dbReference>
<dbReference type="SUPFAM" id="SSF81321">
    <property type="entry name" value="Family A G protein-coupled receptor-like"/>
    <property type="match status" value="1"/>
</dbReference>
<dbReference type="PROSITE" id="PS00237">
    <property type="entry name" value="G_PROTEIN_RECEP_F1_1"/>
    <property type="match status" value="1"/>
</dbReference>
<dbReference type="PROSITE" id="PS50262">
    <property type="entry name" value="G_PROTEIN_RECEP_F1_2"/>
    <property type="match status" value="1"/>
</dbReference>
<dbReference type="PROSITE" id="PS00238">
    <property type="entry name" value="OPSIN"/>
    <property type="match status" value="1"/>
</dbReference>
<protein>
    <recommendedName>
        <fullName>Rhodopsin</fullName>
    </recommendedName>
</protein>